<accession>C3LRN2</accession>
<gene>
    <name evidence="1" type="primary">rplQ</name>
    <name type="ordered locus">VCM66_2490</name>
</gene>
<sequence length="128" mass="14405">MRHRKSGRQLNRNSSHRKAMFSNMASSLVRHEVIKTTLPKAKELRRVVEPLITLAKTDSVANRRLAFARTRDNEVVAKLFNELGPRFAARQGGYTRILKCGFRAGDKAPMAYIELVDRPEAAVEAAAE</sequence>
<protein>
    <recommendedName>
        <fullName evidence="1">Large ribosomal subunit protein bL17</fullName>
    </recommendedName>
    <alternativeName>
        <fullName evidence="2">50S ribosomal protein L17</fullName>
    </alternativeName>
</protein>
<keyword id="KW-0687">Ribonucleoprotein</keyword>
<keyword id="KW-0689">Ribosomal protein</keyword>
<organism>
    <name type="scientific">Vibrio cholerae serotype O1 (strain M66-2)</name>
    <dbReference type="NCBI Taxonomy" id="579112"/>
    <lineage>
        <taxon>Bacteria</taxon>
        <taxon>Pseudomonadati</taxon>
        <taxon>Pseudomonadota</taxon>
        <taxon>Gammaproteobacteria</taxon>
        <taxon>Vibrionales</taxon>
        <taxon>Vibrionaceae</taxon>
        <taxon>Vibrio</taxon>
    </lineage>
</organism>
<feature type="chain" id="PRO_1000184054" description="Large ribosomal subunit protein bL17">
    <location>
        <begin position="1"/>
        <end position="128"/>
    </location>
</feature>
<reference key="1">
    <citation type="journal article" date="2008" name="PLoS ONE">
        <title>A recalibrated molecular clock and independent origins for the cholera pandemic clones.</title>
        <authorList>
            <person name="Feng L."/>
            <person name="Reeves P.R."/>
            <person name="Lan R."/>
            <person name="Ren Y."/>
            <person name="Gao C."/>
            <person name="Zhou Z."/>
            <person name="Ren Y."/>
            <person name="Cheng J."/>
            <person name="Wang W."/>
            <person name="Wang J."/>
            <person name="Qian W."/>
            <person name="Li D."/>
            <person name="Wang L."/>
        </authorList>
    </citation>
    <scope>NUCLEOTIDE SEQUENCE [LARGE SCALE GENOMIC DNA]</scope>
    <source>
        <strain>M66-2</strain>
    </source>
</reference>
<evidence type="ECO:0000255" key="1">
    <source>
        <dbReference type="HAMAP-Rule" id="MF_01368"/>
    </source>
</evidence>
<evidence type="ECO:0000305" key="2"/>
<dbReference type="EMBL" id="CP001233">
    <property type="protein sequence ID" value="ACP06787.1"/>
    <property type="molecule type" value="Genomic_DNA"/>
</dbReference>
<dbReference type="RefSeq" id="WP_001216360.1">
    <property type="nucleotide sequence ID" value="NC_012578.1"/>
</dbReference>
<dbReference type="SMR" id="C3LRN2"/>
<dbReference type="GeneID" id="94012778"/>
<dbReference type="KEGG" id="vcm:VCM66_2490"/>
<dbReference type="HOGENOM" id="CLU_074407_2_0_6"/>
<dbReference type="Proteomes" id="UP000001217">
    <property type="component" value="Chromosome I"/>
</dbReference>
<dbReference type="GO" id="GO:0022625">
    <property type="term" value="C:cytosolic large ribosomal subunit"/>
    <property type="evidence" value="ECO:0007669"/>
    <property type="project" value="TreeGrafter"/>
</dbReference>
<dbReference type="GO" id="GO:0003735">
    <property type="term" value="F:structural constituent of ribosome"/>
    <property type="evidence" value="ECO:0007669"/>
    <property type="project" value="InterPro"/>
</dbReference>
<dbReference type="GO" id="GO:0006412">
    <property type="term" value="P:translation"/>
    <property type="evidence" value="ECO:0007669"/>
    <property type="project" value="UniProtKB-UniRule"/>
</dbReference>
<dbReference type="FunFam" id="3.90.1030.10:FF:000001">
    <property type="entry name" value="50S ribosomal protein L17"/>
    <property type="match status" value="1"/>
</dbReference>
<dbReference type="Gene3D" id="3.90.1030.10">
    <property type="entry name" value="Ribosomal protein L17"/>
    <property type="match status" value="1"/>
</dbReference>
<dbReference type="HAMAP" id="MF_01368">
    <property type="entry name" value="Ribosomal_bL17"/>
    <property type="match status" value="1"/>
</dbReference>
<dbReference type="InterPro" id="IPR000456">
    <property type="entry name" value="Ribosomal_bL17"/>
</dbReference>
<dbReference type="InterPro" id="IPR047859">
    <property type="entry name" value="Ribosomal_bL17_CS"/>
</dbReference>
<dbReference type="InterPro" id="IPR036373">
    <property type="entry name" value="Ribosomal_bL17_sf"/>
</dbReference>
<dbReference type="NCBIfam" id="TIGR00059">
    <property type="entry name" value="L17"/>
    <property type="match status" value="1"/>
</dbReference>
<dbReference type="PANTHER" id="PTHR14413:SF16">
    <property type="entry name" value="LARGE RIBOSOMAL SUBUNIT PROTEIN BL17M"/>
    <property type="match status" value="1"/>
</dbReference>
<dbReference type="PANTHER" id="PTHR14413">
    <property type="entry name" value="RIBOSOMAL PROTEIN L17"/>
    <property type="match status" value="1"/>
</dbReference>
<dbReference type="Pfam" id="PF01196">
    <property type="entry name" value="Ribosomal_L17"/>
    <property type="match status" value="1"/>
</dbReference>
<dbReference type="SUPFAM" id="SSF64263">
    <property type="entry name" value="Prokaryotic ribosomal protein L17"/>
    <property type="match status" value="1"/>
</dbReference>
<dbReference type="PROSITE" id="PS01167">
    <property type="entry name" value="RIBOSOMAL_L17"/>
    <property type="match status" value="1"/>
</dbReference>
<name>RL17_VIBCM</name>
<comment type="subunit">
    <text evidence="1">Part of the 50S ribosomal subunit. Contacts protein L32.</text>
</comment>
<comment type="similarity">
    <text evidence="1">Belongs to the bacterial ribosomal protein bL17 family.</text>
</comment>
<proteinExistence type="inferred from homology"/>